<protein>
    <recommendedName>
        <fullName>Putative late blight resistance protein homolog R1B-16</fullName>
    </recommendedName>
</protein>
<organism>
    <name type="scientific">Solanum demissum</name>
    <name type="common">Wild potato</name>
    <dbReference type="NCBI Taxonomy" id="50514"/>
    <lineage>
        <taxon>Eukaryota</taxon>
        <taxon>Viridiplantae</taxon>
        <taxon>Streptophyta</taxon>
        <taxon>Embryophyta</taxon>
        <taxon>Tracheophyta</taxon>
        <taxon>Spermatophyta</taxon>
        <taxon>Magnoliopsida</taxon>
        <taxon>eudicotyledons</taxon>
        <taxon>Gunneridae</taxon>
        <taxon>Pentapetalae</taxon>
        <taxon>asterids</taxon>
        <taxon>lamiids</taxon>
        <taxon>Solanales</taxon>
        <taxon>Solanaceae</taxon>
        <taxon>Solanoideae</taxon>
        <taxon>Solaneae</taxon>
        <taxon>Solanum</taxon>
    </lineage>
</organism>
<accession>Q6L400</accession>
<dbReference type="EMBL" id="AC149265">
    <property type="protein sequence ID" value="AAT38773.1"/>
    <property type="molecule type" value="Genomic_DNA"/>
</dbReference>
<dbReference type="SMR" id="Q6L400"/>
<dbReference type="GO" id="GO:0005737">
    <property type="term" value="C:cytoplasm"/>
    <property type="evidence" value="ECO:0007669"/>
    <property type="project" value="UniProtKB-SubCell"/>
</dbReference>
<dbReference type="GO" id="GO:0016020">
    <property type="term" value="C:membrane"/>
    <property type="evidence" value="ECO:0007669"/>
    <property type="project" value="UniProtKB-SubCell"/>
</dbReference>
<dbReference type="GO" id="GO:0043531">
    <property type="term" value="F:ADP binding"/>
    <property type="evidence" value="ECO:0007669"/>
    <property type="project" value="InterPro"/>
</dbReference>
<dbReference type="GO" id="GO:0005524">
    <property type="term" value="F:ATP binding"/>
    <property type="evidence" value="ECO:0007669"/>
    <property type="project" value="UniProtKB-KW"/>
</dbReference>
<dbReference type="GO" id="GO:0046872">
    <property type="term" value="F:metal ion binding"/>
    <property type="evidence" value="ECO:0007669"/>
    <property type="project" value="InterPro"/>
</dbReference>
<dbReference type="GO" id="GO:0009626">
    <property type="term" value="P:plant-type hypersensitive response"/>
    <property type="evidence" value="ECO:0007669"/>
    <property type="project" value="UniProtKB-KW"/>
</dbReference>
<dbReference type="CDD" id="cd14798">
    <property type="entry name" value="RX-CC_like"/>
    <property type="match status" value="1"/>
</dbReference>
<dbReference type="FunFam" id="3.40.50.300:FF:001091">
    <property type="entry name" value="Probable disease resistance protein At1g61300"/>
    <property type="match status" value="1"/>
</dbReference>
<dbReference type="FunFam" id="1.10.10.10:FF:000322">
    <property type="entry name" value="Probable disease resistance protein At1g63360"/>
    <property type="match status" value="1"/>
</dbReference>
<dbReference type="Gene3D" id="1.20.5.4130">
    <property type="match status" value="1"/>
</dbReference>
<dbReference type="Gene3D" id="1.10.8.430">
    <property type="entry name" value="Helical domain of apoptotic protease-activating factors"/>
    <property type="match status" value="1"/>
</dbReference>
<dbReference type="Gene3D" id="3.40.50.300">
    <property type="entry name" value="P-loop containing nucleotide triphosphate hydrolases"/>
    <property type="match status" value="1"/>
</dbReference>
<dbReference type="Gene3D" id="3.80.10.10">
    <property type="entry name" value="Ribonuclease Inhibitor"/>
    <property type="match status" value="1"/>
</dbReference>
<dbReference type="Gene3D" id="1.10.10.10">
    <property type="entry name" value="Winged helix-like DNA-binding domain superfamily/Winged helix DNA-binding domain"/>
    <property type="match status" value="1"/>
</dbReference>
<dbReference type="InterPro" id="IPR042197">
    <property type="entry name" value="Apaf_helical"/>
</dbReference>
<dbReference type="InterPro" id="IPR044974">
    <property type="entry name" value="Disease_R_plants"/>
</dbReference>
<dbReference type="InterPro" id="IPR006121">
    <property type="entry name" value="HMA_dom"/>
</dbReference>
<dbReference type="InterPro" id="IPR032675">
    <property type="entry name" value="LRR_dom_sf"/>
</dbReference>
<dbReference type="InterPro" id="IPR055414">
    <property type="entry name" value="LRR_R13L4/SHOC2-like"/>
</dbReference>
<dbReference type="InterPro" id="IPR002182">
    <property type="entry name" value="NB-ARC"/>
</dbReference>
<dbReference type="InterPro" id="IPR027417">
    <property type="entry name" value="P-loop_NTPase"/>
</dbReference>
<dbReference type="InterPro" id="IPR021929">
    <property type="entry name" value="R1A-like_N"/>
</dbReference>
<dbReference type="InterPro" id="IPR038005">
    <property type="entry name" value="RX-like_CC"/>
</dbReference>
<dbReference type="InterPro" id="IPR036388">
    <property type="entry name" value="WH-like_DNA-bd_sf"/>
</dbReference>
<dbReference type="PANTHER" id="PTHR23155:SF1152">
    <property type="entry name" value="AAA+ ATPASE DOMAIN-CONTAINING PROTEIN"/>
    <property type="match status" value="1"/>
</dbReference>
<dbReference type="PANTHER" id="PTHR23155">
    <property type="entry name" value="DISEASE RESISTANCE PROTEIN RP"/>
    <property type="match status" value="1"/>
</dbReference>
<dbReference type="Pfam" id="PF23598">
    <property type="entry name" value="LRR_14"/>
    <property type="match status" value="1"/>
</dbReference>
<dbReference type="Pfam" id="PF00931">
    <property type="entry name" value="NB-ARC"/>
    <property type="match status" value="1"/>
</dbReference>
<dbReference type="Pfam" id="PF12061">
    <property type="entry name" value="NB-LRR"/>
    <property type="match status" value="1"/>
</dbReference>
<dbReference type="Pfam" id="PF23559">
    <property type="entry name" value="WH_DRP"/>
    <property type="match status" value="1"/>
</dbReference>
<dbReference type="PRINTS" id="PR00364">
    <property type="entry name" value="DISEASERSIST"/>
</dbReference>
<dbReference type="SUPFAM" id="SSF52058">
    <property type="entry name" value="L domain-like"/>
    <property type="match status" value="1"/>
</dbReference>
<dbReference type="SUPFAM" id="SSF52540">
    <property type="entry name" value="P-loop containing nucleoside triphosphate hydrolases"/>
    <property type="match status" value="1"/>
</dbReference>
<dbReference type="PROSITE" id="PS50846">
    <property type="entry name" value="HMA_2"/>
    <property type="match status" value="1"/>
</dbReference>
<name>R1B16_SOLDE</name>
<evidence type="ECO:0000250" key="1"/>
<evidence type="ECO:0000255" key="2"/>
<evidence type="ECO:0000255" key="3">
    <source>
        <dbReference type="PROSITE-ProRule" id="PRU00280"/>
    </source>
</evidence>
<evidence type="ECO:0000305" key="4"/>
<gene>
    <name type="primary">R1B-16</name>
    <name type="ORF">PGEC858M02.12</name>
</gene>
<comment type="function">
    <text>Confers resistance to late blight (Phytophthora infestans) races carrying the avirulence gene Avr1. Resistance proteins guard the plant against pathogens that contain an appropriate avirulence protein via an indirect interaction with this avirulence protein. That triggers a defense system including the hypersensitive response, which restricts the pathogen growth.</text>
</comment>
<comment type="subcellular location">
    <subcellularLocation>
        <location evidence="1">Cytoplasm</location>
    </subcellularLocation>
    <subcellularLocation>
        <location evidence="1">Membrane</location>
        <topology evidence="1">Peripheral membrane protein</topology>
    </subcellularLocation>
</comment>
<comment type="miscellaneous">
    <text>This protein is encoded by the haplotype B genome of the allohexaploid Solanum demissum.</text>
</comment>
<comment type="similarity">
    <text evidence="4">Belongs to the disease resistance NB-LRR family.</text>
</comment>
<feature type="chain" id="PRO_0000233969" description="Putative late blight resistance protein homolog R1B-16">
    <location>
        <begin position="1"/>
        <end position="1284"/>
    </location>
</feature>
<feature type="domain" description="NB-ARC">
    <location>
        <begin position="534"/>
        <end position="821"/>
    </location>
</feature>
<feature type="repeat" description="LRR 1">
    <location>
        <begin position="942"/>
        <end position="966"/>
    </location>
</feature>
<feature type="repeat" description="LRR 2">
    <location>
        <begin position="985"/>
        <end position="1010"/>
    </location>
</feature>
<feature type="repeat" description="LRR 3">
    <location>
        <begin position="1013"/>
        <end position="1036"/>
    </location>
</feature>
<feature type="repeat" description="LRR 4">
    <location>
        <begin position="1085"/>
        <end position="1107"/>
    </location>
</feature>
<feature type="repeat" description="LRR 5">
    <location>
        <begin position="1108"/>
        <end position="1135"/>
    </location>
</feature>
<feature type="repeat" description="LRR 6">
    <location>
        <begin position="1159"/>
        <end position="1181"/>
    </location>
</feature>
<feature type="repeat" description="LRR 7">
    <location>
        <begin position="1182"/>
        <end position="1206"/>
    </location>
</feature>
<feature type="domain" description="HMA" evidence="3">
    <location>
        <begin position="1217"/>
        <end position="1284"/>
    </location>
</feature>
<feature type="repeat" description="LRR 8">
    <location>
        <begin position="1219"/>
        <end position="1243"/>
    </location>
</feature>
<feature type="coiled-coil region" evidence="2">
    <location>
        <begin position="533"/>
        <end position="555"/>
    </location>
</feature>
<feature type="binding site" evidence="2">
    <location>
        <begin position="567"/>
        <end position="574"/>
    </location>
    <ligand>
        <name>ATP</name>
        <dbReference type="ChEBI" id="CHEBI:30616"/>
    </ligand>
</feature>
<keyword id="KW-0067">ATP-binding</keyword>
<keyword id="KW-0175">Coiled coil</keyword>
<keyword id="KW-0963">Cytoplasm</keyword>
<keyword id="KW-0381">Hypersensitive response</keyword>
<keyword id="KW-0433">Leucine-rich repeat</keyword>
<keyword id="KW-0472">Membrane</keyword>
<keyword id="KW-0547">Nucleotide-binding</keyword>
<keyword id="KW-0611">Plant defense</keyword>
<keyword id="KW-0677">Repeat</keyword>
<sequence>MNFNNELSDLEKSFLFWTLRVQEYSYDTMHRIDFFLWELQVLNCFLHLQSFTFASECGMLDISQKMLEICKRFNTPPPHNAFAYWKELICKRLCAISIRPDDGFAYWKKVIWKTKQEFRAKYSFPKTLLADNKVDDDDTNPEFVMEFIDAVVGNLNVLVKINDPSSLLFVPGPKEQIEQVLKELKLLRFFVCFVSNKCIEPQYQHTTFYTHALIEASHIAMVVWLNLPIYGNRNQDLASSEVSCLLSNFMEMKIKSIQPGISRNNIYIDVLQALKSTIPQAQKKHAAESGIVEIPTHSLMVGLSDQMANLQEMLCLLKDNLIHLPILDLEFQPQDMDSVIIDAGLLIYSFYDMKGEKEDTTLEDINRELGFDLSRNIEPIKVMIYLVMQKAFQCNLPRIHGLGYVDFLLKNLKDFQGRYSDSFALHKTQIQVIQKEFESLQPFLKVVVEEPHNTFKRLSEDCAIQIIRKAHEVEYVVDACINKGIPHWRLKGWLQIIIEDITCIKEKIQEKNTVDDTMKTVIARTSSKLARTPRMNEEIVGFKDVIENLRNQLLNGTKGQDAISIHGMPGLGKTTLANTLYSDRSVVSQFDICAQCCVSQVYSYKDLLLALLCDAVGEDSDRRELPDNELADMLRKTLLPRRYLILVDDVWDNSAWDDLRGCFPDVNNRSRIILTTRHHEVAKYASVHSDPLHLRMFDKDESWKLLEKKVFGEQSCSPLLKDVGLRIAKMCGQLPLSIVLVAGILSEMEKEVECWEQVANNLGTHIHNDSRAIVNQSYHVLPCHLKSCFLYFGAFLEDEVIDISRLIRLWISESFIKSSEGRRLEDIAEGYLENLIGRNLVMVTQRADSDGKVKACRLHDVLLDFCKERAAEENFLLWINRDQSTNAVYSHKRHAHLAFTEMDSLVEWSASCSLVGSVLLKNYARRPLSSPAFSISHILLNFKFLKVLDLEHQVVIDSIPTELFYLRYLSARIEQNSIPSSISNLWNLETLILKHVSRCTVLLPSTVWDMVKLRHLHIPNFRPENEEALLENSAKLYDLETLSTPYFSRVEDAELMLRKTPNLRKLVCEVECLEYPPQYHVLNFPIRLEILKLYRSKAFNTIPFCISAPNLKYLKLSRSYMDSQYLSETADHLKNLEVLKLYFVKFADHREWKVSNGMFPQLKILKLEYLALMKWIVADDAFPNLEQLVLHECRHLMEIPSCFMDIPSLKYIEVENCNESVVKSAMNIQETQVEDYQNTNFKLVLIGIESISTDTKEKKLTVTRDVDADEVQLVVEKQRKRGML</sequence>
<reference key="1">
    <citation type="journal article" date="2005" name="Plant J.">
        <title>The R1 resistance gene cluster contains three groups of independently evolving, type I R1 homologues and shows substantial structural variation among haplotypes of Solanum demissum.</title>
        <authorList>
            <person name="Kuang H."/>
            <person name="Wei F."/>
            <person name="Marano M.R."/>
            <person name="Wirtz U."/>
            <person name="Wang X."/>
            <person name="Liu J."/>
            <person name="Shum W.P."/>
            <person name="Zaborsky J."/>
            <person name="Tallon L.J."/>
            <person name="Rensink W."/>
            <person name="Lobst S."/>
            <person name="Zhang P."/>
            <person name="Tornqvist C.-E."/>
            <person name="Tek A."/>
            <person name="Bamberg J."/>
            <person name="Helgeson J."/>
            <person name="Fry W."/>
            <person name="You F."/>
            <person name="Luo M.-C."/>
            <person name="Jiang J."/>
            <person name="Buell C.R."/>
            <person name="Baker B."/>
        </authorList>
    </citation>
    <scope>NUCLEOTIDE SEQUENCE [GENOMIC DNA]</scope>
</reference>
<proteinExistence type="inferred from homology"/>